<reference key="1">
    <citation type="journal article" date="2008" name="J. Bacteriol.">
        <title>Comparative genome sequence analysis of multidrug-resistant Acinetobacter baumannii.</title>
        <authorList>
            <person name="Adams M.D."/>
            <person name="Goglin K."/>
            <person name="Molyneaux N."/>
            <person name="Hujer K.M."/>
            <person name="Lavender H."/>
            <person name="Jamison J.J."/>
            <person name="MacDonald I.J."/>
            <person name="Martin K.M."/>
            <person name="Russo T."/>
            <person name="Campagnari A.A."/>
            <person name="Hujer A.M."/>
            <person name="Bonomo R.A."/>
            <person name="Gill S.R."/>
        </authorList>
    </citation>
    <scope>NUCLEOTIDE SEQUENCE [LARGE SCALE GENOMIC DNA]</scope>
    <source>
        <strain>AB307-0294</strain>
    </source>
</reference>
<organism>
    <name type="scientific">Acinetobacter baumannii (strain AB307-0294)</name>
    <dbReference type="NCBI Taxonomy" id="557600"/>
    <lineage>
        <taxon>Bacteria</taxon>
        <taxon>Pseudomonadati</taxon>
        <taxon>Pseudomonadota</taxon>
        <taxon>Gammaproteobacteria</taxon>
        <taxon>Moraxellales</taxon>
        <taxon>Moraxellaceae</taxon>
        <taxon>Acinetobacter</taxon>
        <taxon>Acinetobacter calcoaceticus/baumannii complex</taxon>
    </lineage>
</organism>
<keyword id="KW-0067">ATP-binding</keyword>
<keyword id="KW-0227">DNA damage</keyword>
<keyword id="KW-0234">DNA repair</keyword>
<keyword id="KW-0238">DNA-binding</keyword>
<keyword id="KW-0547">Nucleotide-binding</keyword>
<evidence type="ECO:0000255" key="1">
    <source>
        <dbReference type="HAMAP-Rule" id="MF_00096"/>
    </source>
</evidence>
<gene>
    <name evidence="1" type="primary">mutS</name>
    <name type="ordered locus">ABBFA_002293</name>
</gene>
<name>MUTS_ACIB3</name>
<dbReference type="EMBL" id="CP001172">
    <property type="protein sequence ID" value="ACJ56239.1"/>
    <property type="molecule type" value="Genomic_DNA"/>
</dbReference>
<dbReference type="RefSeq" id="WP_001083258.1">
    <property type="nucleotide sequence ID" value="NZ_CP001172.1"/>
</dbReference>
<dbReference type="SMR" id="B7GW85"/>
<dbReference type="HOGENOM" id="CLU_002472_4_0_6"/>
<dbReference type="Proteomes" id="UP000006924">
    <property type="component" value="Chromosome"/>
</dbReference>
<dbReference type="GO" id="GO:0005829">
    <property type="term" value="C:cytosol"/>
    <property type="evidence" value="ECO:0007669"/>
    <property type="project" value="TreeGrafter"/>
</dbReference>
<dbReference type="GO" id="GO:0005524">
    <property type="term" value="F:ATP binding"/>
    <property type="evidence" value="ECO:0007669"/>
    <property type="project" value="UniProtKB-UniRule"/>
</dbReference>
<dbReference type="GO" id="GO:0140664">
    <property type="term" value="F:ATP-dependent DNA damage sensor activity"/>
    <property type="evidence" value="ECO:0007669"/>
    <property type="project" value="InterPro"/>
</dbReference>
<dbReference type="GO" id="GO:0003684">
    <property type="term" value="F:damaged DNA binding"/>
    <property type="evidence" value="ECO:0007669"/>
    <property type="project" value="UniProtKB-UniRule"/>
</dbReference>
<dbReference type="GO" id="GO:0030983">
    <property type="term" value="F:mismatched DNA binding"/>
    <property type="evidence" value="ECO:0007669"/>
    <property type="project" value="InterPro"/>
</dbReference>
<dbReference type="GO" id="GO:0006298">
    <property type="term" value="P:mismatch repair"/>
    <property type="evidence" value="ECO:0007669"/>
    <property type="project" value="UniProtKB-UniRule"/>
</dbReference>
<dbReference type="FunFam" id="1.10.1420.10:FF:000002">
    <property type="entry name" value="DNA mismatch repair protein MutS"/>
    <property type="match status" value="1"/>
</dbReference>
<dbReference type="FunFam" id="3.40.1170.10:FF:000001">
    <property type="entry name" value="DNA mismatch repair protein MutS"/>
    <property type="match status" value="1"/>
</dbReference>
<dbReference type="FunFam" id="3.40.50.300:FF:000870">
    <property type="entry name" value="MutS protein homolog 4"/>
    <property type="match status" value="1"/>
</dbReference>
<dbReference type="Gene3D" id="1.10.1420.10">
    <property type="match status" value="2"/>
</dbReference>
<dbReference type="Gene3D" id="6.10.140.430">
    <property type="match status" value="1"/>
</dbReference>
<dbReference type="Gene3D" id="3.40.1170.10">
    <property type="entry name" value="DNA repair protein MutS, domain I"/>
    <property type="match status" value="1"/>
</dbReference>
<dbReference type="Gene3D" id="3.30.420.110">
    <property type="entry name" value="MutS, connector domain"/>
    <property type="match status" value="1"/>
</dbReference>
<dbReference type="Gene3D" id="3.40.50.300">
    <property type="entry name" value="P-loop containing nucleotide triphosphate hydrolases"/>
    <property type="match status" value="1"/>
</dbReference>
<dbReference type="HAMAP" id="MF_00096">
    <property type="entry name" value="MutS"/>
    <property type="match status" value="1"/>
</dbReference>
<dbReference type="InterPro" id="IPR005748">
    <property type="entry name" value="DNA_mismatch_repair_MutS"/>
</dbReference>
<dbReference type="InterPro" id="IPR007695">
    <property type="entry name" value="DNA_mismatch_repair_MutS-lik_N"/>
</dbReference>
<dbReference type="InterPro" id="IPR017261">
    <property type="entry name" value="DNA_mismatch_repair_MutS/MSH"/>
</dbReference>
<dbReference type="InterPro" id="IPR000432">
    <property type="entry name" value="DNA_mismatch_repair_MutS_C"/>
</dbReference>
<dbReference type="InterPro" id="IPR007861">
    <property type="entry name" value="DNA_mismatch_repair_MutS_clamp"/>
</dbReference>
<dbReference type="InterPro" id="IPR007696">
    <property type="entry name" value="DNA_mismatch_repair_MutS_core"/>
</dbReference>
<dbReference type="InterPro" id="IPR016151">
    <property type="entry name" value="DNA_mismatch_repair_MutS_N"/>
</dbReference>
<dbReference type="InterPro" id="IPR036187">
    <property type="entry name" value="DNA_mismatch_repair_MutS_sf"/>
</dbReference>
<dbReference type="InterPro" id="IPR007860">
    <property type="entry name" value="DNA_mmatch_repair_MutS_con_dom"/>
</dbReference>
<dbReference type="InterPro" id="IPR045076">
    <property type="entry name" value="MutS"/>
</dbReference>
<dbReference type="InterPro" id="IPR036678">
    <property type="entry name" value="MutS_con_dom_sf"/>
</dbReference>
<dbReference type="InterPro" id="IPR027417">
    <property type="entry name" value="P-loop_NTPase"/>
</dbReference>
<dbReference type="NCBIfam" id="TIGR01070">
    <property type="entry name" value="mutS1"/>
    <property type="match status" value="1"/>
</dbReference>
<dbReference type="NCBIfam" id="NF003810">
    <property type="entry name" value="PRK05399.1"/>
    <property type="match status" value="1"/>
</dbReference>
<dbReference type="PANTHER" id="PTHR11361:SF34">
    <property type="entry name" value="DNA MISMATCH REPAIR PROTEIN MSH1, MITOCHONDRIAL"/>
    <property type="match status" value="1"/>
</dbReference>
<dbReference type="PANTHER" id="PTHR11361">
    <property type="entry name" value="DNA MISMATCH REPAIR PROTEIN MUTS FAMILY MEMBER"/>
    <property type="match status" value="1"/>
</dbReference>
<dbReference type="Pfam" id="PF01624">
    <property type="entry name" value="MutS_I"/>
    <property type="match status" value="1"/>
</dbReference>
<dbReference type="Pfam" id="PF05188">
    <property type="entry name" value="MutS_II"/>
    <property type="match status" value="1"/>
</dbReference>
<dbReference type="Pfam" id="PF05192">
    <property type="entry name" value="MutS_III"/>
    <property type="match status" value="1"/>
</dbReference>
<dbReference type="Pfam" id="PF05190">
    <property type="entry name" value="MutS_IV"/>
    <property type="match status" value="1"/>
</dbReference>
<dbReference type="Pfam" id="PF00488">
    <property type="entry name" value="MutS_V"/>
    <property type="match status" value="1"/>
</dbReference>
<dbReference type="PIRSF" id="PIRSF037677">
    <property type="entry name" value="DNA_mis_repair_Msh6"/>
    <property type="match status" value="1"/>
</dbReference>
<dbReference type="SMART" id="SM00534">
    <property type="entry name" value="MUTSac"/>
    <property type="match status" value="1"/>
</dbReference>
<dbReference type="SMART" id="SM00533">
    <property type="entry name" value="MUTSd"/>
    <property type="match status" value="1"/>
</dbReference>
<dbReference type="SUPFAM" id="SSF55271">
    <property type="entry name" value="DNA repair protein MutS, domain I"/>
    <property type="match status" value="1"/>
</dbReference>
<dbReference type="SUPFAM" id="SSF53150">
    <property type="entry name" value="DNA repair protein MutS, domain II"/>
    <property type="match status" value="1"/>
</dbReference>
<dbReference type="SUPFAM" id="SSF48334">
    <property type="entry name" value="DNA repair protein MutS, domain III"/>
    <property type="match status" value="1"/>
</dbReference>
<dbReference type="SUPFAM" id="SSF52540">
    <property type="entry name" value="P-loop containing nucleoside triphosphate hydrolases"/>
    <property type="match status" value="1"/>
</dbReference>
<dbReference type="PROSITE" id="PS00486">
    <property type="entry name" value="DNA_MISMATCH_REPAIR_2"/>
    <property type="match status" value="1"/>
</dbReference>
<comment type="function">
    <text evidence="1">This protein is involved in the repair of mismatches in DNA. It is possible that it carries out the mismatch recognition step. This protein has a weak ATPase activity.</text>
</comment>
<comment type="similarity">
    <text evidence="1">Belongs to the DNA mismatch repair MutS family.</text>
</comment>
<protein>
    <recommendedName>
        <fullName evidence="1">DNA mismatch repair protein MutS</fullName>
    </recommendedName>
</protein>
<feature type="chain" id="PRO_1000117275" description="DNA mismatch repair protein MutS">
    <location>
        <begin position="1"/>
        <end position="881"/>
    </location>
</feature>
<feature type="binding site" evidence="1">
    <location>
        <begin position="627"/>
        <end position="634"/>
    </location>
    <ligand>
        <name>ATP</name>
        <dbReference type="ChEBI" id="CHEBI:30616"/>
    </ligand>
</feature>
<accession>B7GW85</accession>
<proteinExistence type="inferred from homology"/>
<sequence length="881" mass="97893">MNSAEIMADLSNHTPMMQQYLKVKKDYQHALLFYRMGDFYELFFEDAHLAAKLLGITLTHRGKANGNPIPMAGVPYHSAEGYLARLVKAGRTVAICEQVGEVTGKGPVERKVVRILTPGTLTDDALLTSYQSSNLVALCIHQNQIGFALLDLSAGIFKVQQQDYKPEQLPIELARLMPSEILIDEDLVDPNIIEQIKKHLDCPVTKRPNVDFNLNNAQKTLCDQFSVSTLSGFGLDPLPLAKAAAAALIHYAKETQKTALPHIRSILLEQSSDFIALDPITRRNLEIIEPLFEHGTSLFQLVNDCQTAMGGRLLSRTLMQPVRDTALLDARLDAIEQLIQGYHESPVRLVLKEIGDIERVLSRVALGSARPRDLVQLRHACAQIPFLRNALAPVVQAKKSKLLGQLDQELGDFKSLHQHLMAAIVENPPVLLRDGNVIAEGYDAELDELRQIRDHAGQFLIDLEIKERERTGISTLKIGYNRVSGYYIELTRAQAEQAPADYIRRQTLKNAERYITPELKSFEDKVLSSESRALAREKALFEALLENLRENIAHLQMMSSAIAQIDVIANFAHQARLNNWARPEFTPETGIKIQGGRHPVVEALSKAPFTPNDTFLDVQHRMAIITGPNMGGKSTFMRQTALISLLAYCGSYVPARAAKLGPIDRIFTRIGSADDLSTGKSTFMVEMTETSQILHHATNQSLVLMDEVGRGTSTYDGLSLAWACVVDLTKRVKCLCLFATHYFELTELGSEPGIDNYHVTAQELNGNLILLHKVQQGPASQSHGLQVAKLAGIPANVIKEAQKRLRILEKQQQQHLQTSVQSDLFATLDSEVTPSTQVIEKVIEVEVSSPALDLLKQIEVDNLTPRQALEQLYELKAALNS</sequence>